<comment type="function">
    <text evidence="1">Part of the ABC transporter complex TauABC involved in taurine import. Responsible for energy coupling to the transport system.</text>
</comment>
<comment type="catalytic activity">
    <reaction evidence="1">
        <text>taurine(out) + ATP + H2O = taurine(in) + ADP + phosphate + H(+)</text>
        <dbReference type="Rhea" id="RHEA:14613"/>
        <dbReference type="ChEBI" id="CHEBI:15377"/>
        <dbReference type="ChEBI" id="CHEBI:15378"/>
        <dbReference type="ChEBI" id="CHEBI:30616"/>
        <dbReference type="ChEBI" id="CHEBI:43474"/>
        <dbReference type="ChEBI" id="CHEBI:456216"/>
        <dbReference type="ChEBI" id="CHEBI:507393"/>
        <dbReference type="EC" id="7.6.2.7"/>
    </reaction>
</comment>
<comment type="subunit">
    <text evidence="1">The complex is composed of two ATP-binding proteins (TauB), two transmembrane proteins (TauC) and a solute-binding protein (TauA).</text>
</comment>
<comment type="subcellular location">
    <subcellularLocation>
        <location evidence="1">Cell inner membrane</location>
        <topology evidence="1">Peripheral membrane protein</topology>
    </subcellularLocation>
</comment>
<comment type="similarity">
    <text evidence="1">Belongs to the ABC transporter superfamily. Taurine importer (TC 3.A.1.17.1) family.</text>
</comment>
<feature type="chain" id="PRO_0000275838" description="Taurine import ATP-binding protein TauB">
    <location>
        <begin position="1"/>
        <end position="258"/>
    </location>
</feature>
<feature type="domain" description="ABC transporter" evidence="1">
    <location>
        <begin position="4"/>
        <end position="236"/>
    </location>
</feature>
<feature type="binding site" evidence="1">
    <location>
        <begin position="41"/>
        <end position="48"/>
    </location>
    <ligand>
        <name>ATP</name>
        <dbReference type="ChEBI" id="CHEBI:30616"/>
    </ligand>
</feature>
<gene>
    <name evidence="1" type="primary">tauB</name>
    <name type="ordered locus">H16_B0889</name>
</gene>
<reference key="1">
    <citation type="journal article" date="2006" name="Nat. Biotechnol.">
        <title>Genome sequence of the bioplastic-producing 'Knallgas' bacterium Ralstonia eutropha H16.</title>
        <authorList>
            <person name="Pohlmann A."/>
            <person name="Fricke W.F."/>
            <person name="Reinecke F."/>
            <person name="Kusian B."/>
            <person name="Liesegang H."/>
            <person name="Cramm R."/>
            <person name="Eitinger T."/>
            <person name="Ewering C."/>
            <person name="Poetter M."/>
            <person name="Schwartz E."/>
            <person name="Strittmatter A."/>
            <person name="Voss I."/>
            <person name="Gottschalk G."/>
            <person name="Steinbuechel A."/>
            <person name="Friedrich B."/>
            <person name="Bowien B."/>
        </authorList>
    </citation>
    <scope>NUCLEOTIDE SEQUENCE [LARGE SCALE GENOMIC DNA]</scope>
    <source>
        <strain>ATCC 17699 / DSM 428 / KCTC 22496 / NCIMB 10442 / H16 / Stanier 337</strain>
    </source>
</reference>
<sequence>MYKLEIDNLSVNYGVAGGAKTLALSQVNLTMERGDFVVALGASGCGKTTLLSCIAGFMEPSEGEIRLSGKVVRGPGAERGVVFQKHALMPWLSVADNVALGLRLRGVSRAERMRVAHEKLAAVGLEDVAGKPVYQLSGGMQQRVGIARALACDPAVMLMDEPLGALDALTRESIQALILKLWAKEQKIVFFITHSVEEALFLATRLIVMTPSPGRIAHTYELPFARRFIECGDARAVKADPEFIRYREEIIDLIHATA</sequence>
<organism>
    <name type="scientific">Cupriavidus necator (strain ATCC 17699 / DSM 428 / KCTC 22496 / NCIMB 10442 / H16 / Stanier 337)</name>
    <name type="common">Ralstonia eutropha</name>
    <dbReference type="NCBI Taxonomy" id="381666"/>
    <lineage>
        <taxon>Bacteria</taxon>
        <taxon>Pseudomonadati</taxon>
        <taxon>Pseudomonadota</taxon>
        <taxon>Betaproteobacteria</taxon>
        <taxon>Burkholderiales</taxon>
        <taxon>Burkholderiaceae</taxon>
        <taxon>Cupriavidus</taxon>
    </lineage>
</organism>
<proteinExistence type="inferred from homology"/>
<dbReference type="EC" id="7.6.2.7" evidence="1"/>
<dbReference type="EMBL" id="AM260480">
    <property type="protein sequence ID" value="CAJ95681.1"/>
    <property type="molecule type" value="Genomic_DNA"/>
</dbReference>
<dbReference type="RefSeq" id="WP_010813418.1">
    <property type="nucleotide sequence ID" value="NZ_CP039288.1"/>
</dbReference>
<dbReference type="SMR" id="Q0K2U3"/>
<dbReference type="STRING" id="381666.H16_B0889"/>
<dbReference type="KEGG" id="reh:H16_B0889"/>
<dbReference type="eggNOG" id="COG4525">
    <property type="taxonomic scope" value="Bacteria"/>
</dbReference>
<dbReference type="HOGENOM" id="CLU_000604_1_22_4"/>
<dbReference type="OrthoDB" id="9783039at2"/>
<dbReference type="Proteomes" id="UP000008210">
    <property type="component" value="Chromosome 2"/>
</dbReference>
<dbReference type="GO" id="GO:0005886">
    <property type="term" value="C:plasma membrane"/>
    <property type="evidence" value="ECO:0007669"/>
    <property type="project" value="UniProtKB-SubCell"/>
</dbReference>
<dbReference type="GO" id="GO:0015411">
    <property type="term" value="F:ABC-type taurine transporter transporter activity"/>
    <property type="evidence" value="ECO:0007669"/>
    <property type="project" value="UniProtKB-EC"/>
</dbReference>
<dbReference type="GO" id="GO:0005524">
    <property type="term" value="F:ATP binding"/>
    <property type="evidence" value="ECO:0007669"/>
    <property type="project" value="UniProtKB-KW"/>
</dbReference>
<dbReference type="GO" id="GO:0016887">
    <property type="term" value="F:ATP hydrolysis activity"/>
    <property type="evidence" value="ECO:0007669"/>
    <property type="project" value="InterPro"/>
</dbReference>
<dbReference type="CDD" id="cd03293">
    <property type="entry name" value="ABC_NrtD_SsuB_transporters"/>
    <property type="match status" value="1"/>
</dbReference>
<dbReference type="Gene3D" id="3.40.50.300">
    <property type="entry name" value="P-loop containing nucleotide triphosphate hydrolases"/>
    <property type="match status" value="1"/>
</dbReference>
<dbReference type="InterPro" id="IPR003593">
    <property type="entry name" value="AAA+_ATPase"/>
</dbReference>
<dbReference type="InterPro" id="IPR003439">
    <property type="entry name" value="ABC_transporter-like_ATP-bd"/>
</dbReference>
<dbReference type="InterPro" id="IPR017871">
    <property type="entry name" value="ABC_transporter-like_CS"/>
</dbReference>
<dbReference type="InterPro" id="IPR050166">
    <property type="entry name" value="ABC_transporter_ATP-bind"/>
</dbReference>
<dbReference type="InterPro" id="IPR027417">
    <property type="entry name" value="P-loop_NTPase"/>
</dbReference>
<dbReference type="PANTHER" id="PTHR42788:SF18">
    <property type="entry name" value="TAURINE IMPORT ATP-BINDING PROTEIN TAUB"/>
    <property type="match status" value="1"/>
</dbReference>
<dbReference type="PANTHER" id="PTHR42788">
    <property type="entry name" value="TAURINE IMPORT ATP-BINDING PROTEIN-RELATED"/>
    <property type="match status" value="1"/>
</dbReference>
<dbReference type="Pfam" id="PF00005">
    <property type="entry name" value="ABC_tran"/>
    <property type="match status" value="1"/>
</dbReference>
<dbReference type="SMART" id="SM00382">
    <property type="entry name" value="AAA"/>
    <property type="match status" value="1"/>
</dbReference>
<dbReference type="SUPFAM" id="SSF52540">
    <property type="entry name" value="P-loop containing nucleoside triphosphate hydrolases"/>
    <property type="match status" value="1"/>
</dbReference>
<dbReference type="PROSITE" id="PS00211">
    <property type="entry name" value="ABC_TRANSPORTER_1"/>
    <property type="match status" value="1"/>
</dbReference>
<dbReference type="PROSITE" id="PS50893">
    <property type="entry name" value="ABC_TRANSPORTER_2"/>
    <property type="match status" value="1"/>
</dbReference>
<dbReference type="PROSITE" id="PS51250">
    <property type="entry name" value="TAUB"/>
    <property type="match status" value="1"/>
</dbReference>
<accession>Q0K2U3</accession>
<name>TAUB_CUPNH</name>
<keyword id="KW-0067">ATP-binding</keyword>
<keyword id="KW-0997">Cell inner membrane</keyword>
<keyword id="KW-1003">Cell membrane</keyword>
<keyword id="KW-0472">Membrane</keyword>
<keyword id="KW-0547">Nucleotide-binding</keyword>
<keyword id="KW-1185">Reference proteome</keyword>
<keyword id="KW-1278">Translocase</keyword>
<keyword id="KW-0813">Transport</keyword>
<protein>
    <recommendedName>
        <fullName evidence="1">Taurine import ATP-binding protein TauB</fullName>
        <ecNumber evidence="1">7.6.2.7</ecNumber>
    </recommendedName>
</protein>
<evidence type="ECO:0000255" key="1">
    <source>
        <dbReference type="HAMAP-Rule" id="MF_01714"/>
    </source>
</evidence>